<organism>
    <name type="scientific">Schizosaccharomyces pombe (strain 972 / ATCC 24843)</name>
    <name type="common">Fission yeast</name>
    <dbReference type="NCBI Taxonomy" id="284812"/>
    <lineage>
        <taxon>Eukaryota</taxon>
        <taxon>Fungi</taxon>
        <taxon>Dikarya</taxon>
        <taxon>Ascomycota</taxon>
        <taxon>Taphrinomycotina</taxon>
        <taxon>Schizosaccharomycetes</taxon>
        <taxon>Schizosaccharomycetales</taxon>
        <taxon>Schizosaccharomycetaceae</taxon>
        <taxon>Schizosaccharomyces</taxon>
    </lineage>
</organism>
<keyword id="KW-0325">Glycoprotein</keyword>
<keyword id="KW-0326">Glycosidase</keyword>
<keyword id="KW-0378">Hydrolase</keyword>
<keyword id="KW-1185">Reference proteome</keyword>
<keyword id="KW-0964">Secreted</keyword>
<keyword id="KW-0732">Signal</keyword>
<gene>
    <name type="ORF">SPAPB1E7.04c</name>
</gene>
<evidence type="ECO:0000255" key="1"/>
<evidence type="ECO:0000255" key="2">
    <source>
        <dbReference type="PROSITE-ProRule" id="PRU01258"/>
    </source>
</evidence>
<evidence type="ECO:0000256" key="3">
    <source>
        <dbReference type="SAM" id="MobiDB-lite"/>
    </source>
</evidence>
<evidence type="ECO:0000305" key="4"/>
<accession>Q9C105</accession>
<dbReference type="EC" id="3.2.1.-"/>
<dbReference type="EMBL" id="CU329670">
    <property type="protein sequence ID" value="CAC36921.1"/>
    <property type="molecule type" value="Genomic_DNA"/>
</dbReference>
<dbReference type="SMR" id="Q9C105"/>
<dbReference type="BioGRID" id="280097">
    <property type="interactions" value="29"/>
</dbReference>
<dbReference type="FunCoup" id="Q9C105">
    <property type="interactions" value="1"/>
</dbReference>
<dbReference type="STRING" id="284812.Q9C105"/>
<dbReference type="CAZy" id="GH18">
    <property type="family name" value="Glycoside Hydrolase Family 18"/>
</dbReference>
<dbReference type="iPTMnet" id="Q9C105"/>
<dbReference type="PaxDb" id="4896-SPAPB1E7.04c.1"/>
<dbReference type="EnsemblFungi" id="SPAPB1E7.04c.1">
    <property type="protein sequence ID" value="SPAPB1E7.04c.1:pep"/>
    <property type="gene ID" value="SPAPB1E7.04c"/>
</dbReference>
<dbReference type="KEGG" id="spo:2543683"/>
<dbReference type="PomBase" id="SPAPB1E7.04c"/>
<dbReference type="VEuPathDB" id="FungiDB:SPAPB1E7.04c"/>
<dbReference type="eggNOG" id="KOG4701">
    <property type="taxonomic scope" value="Eukaryota"/>
</dbReference>
<dbReference type="HOGENOM" id="CLU_267181_0_0_1"/>
<dbReference type="InParanoid" id="Q9C105"/>
<dbReference type="OMA" id="TESHMES"/>
<dbReference type="PRO" id="PR:Q9C105"/>
<dbReference type="Proteomes" id="UP000002485">
    <property type="component" value="Chromosome I"/>
</dbReference>
<dbReference type="GO" id="GO:0005576">
    <property type="term" value="C:extracellular region"/>
    <property type="evidence" value="ECO:0000314"/>
    <property type="project" value="PomBase"/>
</dbReference>
<dbReference type="GO" id="GO:0009277">
    <property type="term" value="C:fungal-type cell wall"/>
    <property type="evidence" value="ECO:0000266"/>
    <property type="project" value="PomBase"/>
</dbReference>
<dbReference type="GO" id="GO:0000324">
    <property type="term" value="C:fungal-type vacuole"/>
    <property type="evidence" value="ECO:0007005"/>
    <property type="project" value="PomBase"/>
</dbReference>
<dbReference type="GO" id="GO:0004568">
    <property type="term" value="F:chitinase activity"/>
    <property type="evidence" value="ECO:0000318"/>
    <property type="project" value="GO_Central"/>
</dbReference>
<dbReference type="GO" id="GO:0005975">
    <property type="term" value="P:carbohydrate metabolic process"/>
    <property type="evidence" value="ECO:0007669"/>
    <property type="project" value="InterPro"/>
</dbReference>
<dbReference type="GO" id="GO:0006032">
    <property type="term" value="P:chitin catabolic process"/>
    <property type="evidence" value="ECO:0000305"/>
    <property type="project" value="PomBase"/>
</dbReference>
<dbReference type="CDD" id="cd02877">
    <property type="entry name" value="GH18_hevamine_XipI_class_III"/>
    <property type="match status" value="1"/>
</dbReference>
<dbReference type="Gene3D" id="3.20.20.80">
    <property type="entry name" value="Glycosidases"/>
    <property type="match status" value="1"/>
</dbReference>
<dbReference type="InterPro" id="IPR045321">
    <property type="entry name" value="Cts1-like"/>
</dbReference>
<dbReference type="InterPro" id="IPR001223">
    <property type="entry name" value="Glyco_hydro18_cat"/>
</dbReference>
<dbReference type="InterPro" id="IPR017853">
    <property type="entry name" value="Glycoside_hydrolase_SF"/>
</dbReference>
<dbReference type="InterPro" id="IPR050542">
    <property type="entry name" value="Glycosyl_Hydrlase18_Chitinase"/>
</dbReference>
<dbReference type="PANTHER" id="PTHR45708">
    <property type="entry name" value="ENDOCHITINASE"/>
    <property type="match status" value="1"/>
</dbReference>
<dbReference type="PANTHER" id="PTHR45708:SF49">
    <property type="entry name" value="ENDOCHITINASE"/>
    <property type="match status" value="1"/>
</dbReference>
<dbReference type="SUPFAM" id="SSF51445">
    <property type="entry name" value="(Trans)glycosidases"/>
    <property type="match status" value="1"/>
</dbReference>
<dbReference type="PROSITE" id="PS51910">
    <property type="entry name" value="GH18_2"/>
    <property type="match status" value="1"/>
</dbReference>
<feature type="signal peptide" evidence="1">
    <location>
        <begin position="1"/>
        <end position="19"/>
    </location>
</feature>
<feature type="chain" id="PRO_0000314114" description="Chitinase-like protein PB1E7.04c">
    <location>
        <begin position="20"/>
        <end position="1236"/>
    </location>
</feature>
<feature type="domain" description="GH18" evidence="2">
    <location>
        <begin position="26"/>
        <end position="325"/>
    </location>
</feature>
<feature type="region of interest" description="Disordered" evidence="3">
    <location>
        <begin position="326"/>
        <end position="367"/>
    </location>
</feature>
<feature type="region of interest" description="Disordered" evidence="3">
    <location>
        <begin position="449"/>
        <end position="497"/>
    </location>
</feature>
<feature type="region of interest" description="Disordered" evidence="3">
    <location>
        <begin position="584"/>
        <end position="625"/>
    </location>
</feature>
<feature type="region of interest" description="Disordered" evidence="3">
    <location>
        <begin position="804"/>
        <end position="836"/>
    </location>
</feature>
<feature type="region of interest" description="Disordered" evidence="3">
    <location>
        <begin position="868"/>
        <end position="927"/>
    </location>
</feature>
<feature type="region of interest" description="Disordered" evidence="3">
    <location>
        <begin position="946"/>
        <end position="979"/>
    </location>
</feature>
<feature type="region of interest" description="Disordered" evidence="3">
    <location>
        <begin position="1125"/>
        <end position="1159"/>
    </location>
</feature>
<feature type="compositionally biased region" description="Polar residues" evidence="3">
    <location>
        <begin position="339"/>
        <end position="351"/>
    </location>
</feature>
<feature type="compositionally biased region" description="Low complexity" evidence="3">
    <location>
        <begin position="352"/>
        <end position="367"/>
    </location>
</feature>
<feature type="compositionally biased region" description="Polar residues" evidence="3">
    <location>
        <begin position="810"/>
        <end position="821"/>
    </location>
</feature>
<feature type="compositionally biased region" description="Low complexity" evidence="3">
    <location>
        <begin position="822"/>
        <end position="832"/>
    </location>
</feature>
<feature type="compositionally biased region" description="Low complexity" evidence="3">
    <location>
        <begin position="1125"/>
        <end position="1156"/>
    </location>
</feature>
<feature type="glycosylation site" description="N-linked (GlcNAc...) asparagine" evidence="1">
    <location>
        <position position="21"/>
    </location>
</feature>
<feature type="glycosylation site" description="N-linked (GlcNAc...) asparagine" evidence="1">
    <location>
        <position position="24"/>
    </location>
</feature>
<feature type="glycosylation site" description="N-linked (GlcNAc...) asparagine" evidence="1">
    <location>
        <position position="54"/>
    </location>
</feature>
<feature type="glycosylation site" description="N-linked (GlcNAc...) asparagine" evidence="1">
    <location>
        <position position="123"/>
    </location>
</feature>
<feature type="glycosylation site" description="N-linked (GlcNAc...) asparagine" evidence="1">
    <location>
        <position position="225"/>
    </location>
</feature>
<feature type="glycosylation site" description="N-linked (GlcNAc...) asparagine" evidence="1">
    <location>
        <position position="237"/>
    </location>
</feature>
<feature type="glycosylation site" description="N-linked (GlcNAc...) asparagine" evidence="1">
    <location>
        <position position="255"/>
    </location>
</feature>
<feature type="glycosylation site" description="N-linked (GlcNAc...) asparagine" evidence="1">
    <location>
        <position position="267"/>
    </location>
</feature>
<feature type="glycosylation site" description="N-linked (GlcNAc...) asparagine" evidence="1">
    <location>
        <position position="277"/>
    </location>
</feature>
<feature type="glycosylation site" description="N-linked (GlcNAc...) asparagine" evidence="1">
    <location>
        <position position="288"/>
    </location>
</feature>
<feature type="glycosylation site" description="N-linked (GlcNAc...) asparagine" evidence="1">
    <location>
        <position position="309"/>
    </location>
</feature>
<feature type="glycosylation site" description="N-linked (GlcNAc...) asparagine" evidence="1">
    <location>
        <position position="715"/>
    </location>
</feature>
<feature type="glycosylation site" description="N-linked (GlcNAc...) asparagine" evidence="1">
    <location>
        <position position="737"/>
    </location>
</feature>
<feature type="glycosylation site" description="N-linked (GlcNAc...) asparagine" evidence="1">
    <location>
        <position position="768"/>
    </location>
</feature>
<feature type="glycosylation site" description="N-linked (GlcNAc...) asparagine" evidence="1">
    <location>
        <position position="786"/>
    </location>
</feature>
<feature type="glycosylation site" description="N-linked (GlcNAc...) asparagine" evidence="1">
    <location>
        <position position="813"/>
    </location>
</feature>
<protein>
    <recommendedName>
        <fullName>Chitinase-like protein PB1E7.04c</fullName>
        <ecNumber>3.2.1.-</ecNumber>
    </recommendedName>
</protein>
<name>YKT4_SCHPO</name>
<reference key="1">
    <citation type="journal article" date="2002" name="Nature">
        <title>The genome sequence of Schizosaccharomyces pombe.</title>
        <authorList>
            <person name="Wood V."/>
            <person name="Gwilliam R."/>
            <person name="Rajandream M.A."/>
            <person name="Lyne M.H."/>
            <person name="Lyne R."/>
            <person name="Stewart A."/>
            <person name="Sgouros J.G."/>
            <person name="Peat N."/>
            <person name="Hayles J."/>
            <person name="Baker S.G."/>
            <person name="Basham D."/>
            <person name="Bowman S."/>
            <person name="Brooks K."/>
            <person name="Brown D."/>
            <person name="Brown S."/>
            <person name="Chillingworth T."/>
            <person name="Churcher C.M."/>
            <person name="Collins M."/>
            <person name="Connor R."/>
            <person name="Cronin A."/>
            <person name="Davis P."/>
            <person name="Feltwell T."/>
            <person name="Fraser A."/>
            <person name="Gentles S."/>
            <person name="Goble A."/>
            <person name="Hamlin N."/>
            <person name="Harris D.E."/>
            <person name="Hidalgo J."/>
            <person name="Hodgson G."/>
            <person name="Holroyd S."/>
            <person name="Hornsby T."/>
            <person name="Howarth S."/>
            <person name="Huckle E.J."/>
            <person name="Hunt S."/>
            <person name="Jagels K."/>
            <person name="James K.D."/>
            <person name="Jones L."/>
            <person name="Jones M."/>
            <person name="Leather S."/>
            <person name="McDonald S."/>
            <person name="McLean J."/>
            <person name="Mooney P."/>
            <person name="Moule S."/>
            <person name="Mungall K.L."/>
            <person name="Murphy L.D."/>
            <person name="Niblett D."/>
            <person name="Odell C."/>
            <person name="Oliver K."/>
            <person name="O'Neil S."/>
            <person name="Pearson D."/>
            <person name="Quail M.A."/>
            <person name="Rabbinowitsch E."/>
            <person name="Rutherford K.M."/>
            <person name="Rutter S."/>
            <person name="Saunders D."/>
            <person name="Seeger K."/>
            <person name="Sharp S."/>
            <person name="Skelton J."/>
            <person name="Simmonds M.N."/>
            <person name="Squares R."/>
            <person name="Squares S."/>
            <person name="Stevens K."/>
            <person name="Taylor K."/>
            <person name="Taylor R.G."/>
            <person name="Tivey A."/>
            <person name="Walsh S.V."/>
            <person name="Warren T."/>
            <person name="Whitehead S."/>
            <person name="Woodward J.R."/>
            <person name="Volckaert G."/>
            <person name="Aert R."/>
            <person name="Robben J."/>
            <person name="Grymonprez B."/>
            <person name="Weltjens I."/>
            <person name="Vanstreels E."/>
            <person name="Rieger M."/>
            <person name="Schaefer M."/>
            <person name="Mueller-Auer S."/>
            <person name="Gabel C."/>
            <person name="Fuchs M."/>
            <person name="Duesterhoeft A."/>
            <person name="Fritzc C."/>
            <person name="Holzer E."/>
            <person name="Moestl D."/>
            <person name="Hilbert H."/>
            <person name="Borzym K."/>
            <person name="Langer I."/>
            <person name="Beck A."/>
            <person name="Lehrach H."/>
            <person name="Reinhardt R."/>
            <person name="Pohl T.M."/>
            <person name="Eger P."/>
            <person name="Zimmermann W."/>
            <person name="Wedler H."/>
            <person name="Wambutt R."/>
            <person name="Purnelle B."/>
            <person name="Goffeau A."/>
            <person name="Cadieu E."/>
            <person name="Dreano S."/>
            <person name="Gloux S."/>
            <person name="Lelaure V."/>
            <person name="Mottier S."/>
            <person name="Galibert F."/>
            <person name="Aves S.J."/>
            <person name="Xiang Z."/>
            <person name="Hunt C."/>
            <person name="Moore K."/>
            <person name="Hurst S.M."/>
            <person name="Lucas M."/>
            <person name="Rochet M."/>
            <person name="Gaillardin C."/>
            <person name="Tallada V.A."/>
            <person name="Garzon A."/>
            <person name="Thode G."/>
            <person name="Daga R.R."/>
            <person name="Cruzado L."/>
            <person name="Jimenez J."/>
            <person name="Sanchez M."/>
            <person name="del Rey F."/>
            <person name="Benito J."/>
            <person name="Dominguez A."/>
            <person name="Revuelta J.L."/>
            <person name="Moreno S."/>
            <person name="Armstrong J."/>
            <person name="Forsburg S.L."/>
            <person name="Cerutti L."/>
            <person name="Lowe T."/>
            <person name="McCombie W.R."/>
            <person name="Paulsen I."/>
            <person name="Potashkin J."/>
            <person name="Shpakovski G.V."/>
            <person name="Ussery D."/>
            <person name="Barrell B.G."/>
            <person name="Nurse P."/>
        </authorList>
    </citation>
    <scope>NUCLEOTIDE SEQUENCE [LARGE SCALE GENOMIC DNA]</scope>
    <source>
        <strain>972 / ATCC 24843</strain>
    </source>
</reference>
<proteinExistence type="inferred from homology"/>
<comment type="subcellular location">
    <subcellularLocation>
        <location evidence="4">Secreted</location>
    </subcellularLocation>
</comment>
<comment type="similarity">
    <text evidence="4">Belongs to the glycosyl hydrolase 18 family. Chitinase class III subfamily.</text>
</comment>
<comment type="caution">
    <text evidence="4">Lacks the conserved Glu residue in position 166 essential for chitinase activity. Its enzyme activity is therefore unsure.</text>
</comment>
<sequence>MRLISSLLLLVYSARLALSLNLTNQTAVLGYWGSNLAGKMGDRDQKRLSSYCQNTTYDAIILSSVIDFNVDGWPVYDFSNLCSDSDTFSGSELKKCPQIETDIQVCQENGIKVLLSIGGYNGNFSLNNDDDGTNFAFQVWNIFGSGEDSYRPFGKAVVDGFDLEVNKGTNTAYSAFAKRMLEIYASDPRRKYYISAAPTCMVPDHTLTKAISENSFDFLSIHTFNSSTGEGCSGSRNSTFDAWVEYAEDSAYNTNTSLFYGVVGHQNGSNGFISPKNLTRDLLNYKANSTLFGGVTIWDTSLAAMSYDNSSETFVEAIHKILDTKSKHSSSKSSHDSSQGLESTSSIALNPTSSISSTSSSSSTSSAISTISQDHTKTVTSVSDEPTTITASGATSVTTTTKTDFDTVTTTIVSTSTLISASDSTSIIVSSYVSTVTQPASTRVQTTTVSSISTSVKQPTASVASSSVSVPSSSSVQPQSSTPISSSSSASSPQSTLSTSSEVVSEVSSTLLSGSSAIPSTSSSTPSSSIISSPMTSVLSSSSSIPTSSSSDFSSSITTISSGISSSSIPSTFSSVSSILSSSTSSPSSTSLSISSSSTSSTFSSASTSSPSSISSSISSSSTILSSPTPSTSSLMISSSSIISGSSSILSSSISTIPISSSLSTYSSSVIPSSSTLVSSSSSLIVSSSPVASSSSSPIPSSSSLVSTYSASLSNITHSSLSLTAMSSSSAIPTSVNSSTLITASSSNTLLSSITSSSAIVSSTTVSNISSNLPSATASSQSQLTNSSTLATSLYLSSSSSRTISTSSTNEYNTSFHAPTVSSTTSSSSTTSLAANKGVNSNSITSLNLESTSSVTSTAYTTDSVTSTTALTSQGPSSSVVSSSLSSTTSLSTSIPVTSSVAPAVTSTGSETSSVVGSGTDSATSSSWTAETSSSAITSSVAASVTPTSSSSASSWSSSSEVDPSTAASATGSSTSSIATASVSGSSTSSVATASATDSSTSSIAAASVTGSSTSSVATASVTDSSTSSVATASATDSSTSSIAVASVTGSSTSSVATASATDSSTSSVATASITGSLSSSIATASVTGSPTSSVTAVSSTSSVEGTASSTIAAAASAATLSSDAASGSSTVTSSATASSSSSAATTADSSVTTDTPSNDFNANVDTAGLWYVSALSSYSVPAGFAWTTIDGFSVVMPSANAYKKRSLPIKATANPALNGAGTWKTIHTSATTTAA</sequence>